<name>PBL11_ARATH</name>
<gene>
    <name evidence="5" type="primary">PBL11</name>
    <name evidence="6" type="synonym">NAK</name>
    <name type="ordered locus">At5g02290</name>
    <name type="ORF">T1E22_50</name>
</gene>
<accession>P43293</accession>
<accession>Q0WQ30</accession>
<accession>Q9LZ96</accession>
<dbReference type="EC" id="2.7.11.1" evidence="7"/>
<dbReference type="EMBL" id="L07248">
    <property type="protein sequence ID" value="AAA18853.1"/>
    <property type="molecule type" value="mRNA"/>
</dbReference>
<dbReference type="EMBL" id="AL162874">
    <property type="protein sequence ID" value="CAB85534.1"/>
    <property type="molecule type" value="Genomic_DNA"/>
</dbReference>
<dbReference type="EMBL" id="CP002688">
    <property type="protein sequence ID" value="AED90455.1"/>
    <property type="molecule type" value="Genomic_DNA"/>
</dbReference>
<dbReference type="EMBL" id="CP002688">
    <property type="protein sequence ID" value="AED90456.1"/>
    <property type="molecule type" value="Genomic_DNA"/>
</dbReference>
<dbReference type="EMBL" id="AK228878">
    <property type="protein sequence ID" value="BAF00769.1"/>
    <property type="molecule type" value="mRNA"/>
</dbReference>
<dbReference type="EMBL" id="AY086765">
    <property type="protein sequence ID" value="AAM63816.1"/>
    <property type="molecule type" value="mRNA"/>
</dbReference>
<dbReference type="PIR" id="T48250">
    <property type="entry name" value="T48250"/>
</dbReference>
<dbReference type="RefSeq" id="NP_195849.1">
    <property type="nucleotide sequence ID" value="NM_120307.4"/>
</dbReference>
<dbReference type="RefSeq" id="NP_850755.1">
    <property type="nucleotide sequence ID" value="NM_180424.3"/>
</dbReference>
<dbReference type="SMR" id="P43293"/>
<dbReference type="FunCoup" id="P43293">
    <property type="interactions" value="2964"/>
</dbReference>
<dbReference type="STRING" id="3702.P43293"/>
<dbReference type="iPTMnet" id="P43293"/>
<dbReference type="PaxDb" id="3702-AT5G02290.1"/>
<dbReference type="ProteomicsDB" id="236797"/>
<dbReference type="EnsemblPlants" id="AT5G02290.1">
    <property type="protein sequence ID" value="AT5G02290.1"/>
    <property type="gene ID" value="AT5G02290"/>
</dbReference>
<dbReference type="EnsemblPlants" id="AT5G02290.2">
    <property type="protein sequence ID" value="AT5G02290.2"/>
    <property type="gene ID" value="AT5G02290"/>
</dbReference>
<dbReference type="GeneID" id="831880"/>
<dbReference type="Gramene" id="AT5G02290.1">
    <property type="protein sequence ID" value="AT5G02290.1"/>
    <property type="gene ID" value="AT5G02290"/>
</dbReference>
<dbReference type="Gramene" id="AT5G02290.2">
    <property type="protein sequence ID" value="AT5G02290.2"/>
    <property type="gene ID" value="AT5G02290"/>
</dbReference>
<dbReference type="KEGG" id="ath:AT5G02290"/>
<dbReference type="Araport" id="AT5G02290"/>
<dbReference type="TAIR" id="AT5G02290">
    <property type="gene designation" value="NAK"/>
</dbReference>
<dbReference type="eggNOG" id="KOG1187">
    <property type="taxonomic scope" value="Eukaryota"/>
</dbReference>
<dbReference type="HOGENOM" id="CLU_000288_21_1_1"/>
<dbReference type="InParanoid" id="P43293"/>
<dbReference type="OMA" id="YMPRTEG"/>
<dbReference type="OrthoDB" id="4062651at2759"/>
<dbReference type="PhylomeDB" id="P43293"/>
<dbReference type="PRO" id="PR:P43293"/>
<dbReference type="Proteomes" id="UP000006548">
    <property type="component" value="Chromosome 5"/>
</dbReference>
<dbReference type="ExpressionAtlas" id="P43293">
    <property type="expression patterns" value="baseline and differential"/>
</dbReference>
<dbReference type="GO" id="GO:0005886">
    <property type="term" value="C:plasma membrane"/>
    <property type="evidence" value="ECO:0007005"/>
    <property type="project" value="TAIR"/>
</dbReference>
<dbReference type="GO" id="GO:0005524">
    <property type="term" value="F:ATP binding"/>
    <property type="evidence" value="ECO:0007669"/>
    <property type="project" value="UniProtKB-KW"/>
</dbReference>
<dbReference type="GO" id="GO:0106310">
    <property type="term" value="F:protein serine kinase activity"/>
    <property type="evidence" value="ECO:0007669"/>
    <property type="project" value="RHEA"/>
</dbReference>
<dbReference type="GO" id="GO:0004674">
    <property type="term" value="F:protein serine/threonine kinase activity"/>
    <property type="evidence" value="ECO:0007669"/>
    <property type="project" value="UniProtKB-KW"/>
</dbReference>
<dbReference type="GO" id="GO:0006952">
    <property type="term" value="P:defense response"/>
    <property type="evidence" value="ECO:0007669"/>
    <property type="project" value="UniProtKB-KW"/>
</dbReference>
<dbReference type="CDD" id="cd14066">
    <property type="entry name" value="STKc_IRAK"/>
    <property type="match status" value="1"/>
</dbReference>
<dbReference type="FunFam" id="1.10.510.10:FF:000258">
    <property type="entry name" value="Probable serine/threonine-protein kinase PBL8"/>
    <property type="match status" value="1"/>
</dbReference>
<dbReference type="FunFam" id="3.30.200.20:FF:000228">
    <property type="entry name" value="Serine/threonine-protein kinase BIK1"/>
    <property type="match status" value="1"/>
</dbReference>
<dbReference type="Gene3D" id="3.30.200.20">
    <property type="entry name" value="Phosphorylase Kinase, domain 1"/>
    <property type="match status" value="1"/>
</dbReference>
<dbReference type="Gene3D" id="1.10.510.10">
    <property type="entry name" value="Transferase(Phosphotransferase) domain 1"/>
    <property type="match status" value="1"/>
</dbReference>
<dbReference type="InterPro" id="IPR011009">
    <property type="entry name" value="Kinase-like_dom_sf"/>
</dbReference>
<dbReference type="InterPro" id="IPR050823">
    <property type="entry name" value="Plant_Ser_Thr_Prot_Kinase"/>
</dbReference>
<dbReference type="InterPro" id="IPR000719">
    <property type="entry name" value="Prot_kinase_dom"/>
</dbReference>
<dbReference type="InterPro" id="IPR017441">
    <property type="entry name" value="Protein_kinase_ATP_BS"/>
</dbReference>
<dbReference type="InterPro" id="IPR001245">
    <property type="entry name" value="Ser-Thr/Tyr_kinase_cat_dom"/>
</dbReference>
<dbReference type="InterPro" id="IPR008271">
    <property type="entry name" value="Ser/Thr_kinase_AS"/>
</dbReference>
<dbReference type="PANTHER" id="PTHR45621">
    <property type="entry name" value="OS01G0588500 PROTEIN-RELATED"/>
    <property type="match status" value="1"/>
</dbReference>
<dbReference type="Pfam" id="PF07714">
    <property type="entry name" value="PK_Tyr_Ser-Thr"/>
    <property type="match status" value="1"/>
</dbReference>
<dbReference type="SUPFAM" id="SSF56112">
    <property type="entry name" value="Protein kinase-like (PK-like)"/>
    <property type="match status" value="1"/>
</dbReference>
<dbReference type="PROSITE" id="PS00107">
    <property type="entry name" value="PROTEIN_KINASE_ATP"/>
    <property type="match status" value="1"/>
</dbReference>
<dbReference type="PROSITE" id="PS50011">
    <property type="entry name" value="PROTEIN_KINASE_DOM"/>
    <property type="match status" value="1"/>
</dbReference>
<dbReference type="PROSITE" id="PS00108">
    <property type="entry name" value="PROTEIN_KINASE_ST"/>
    <property type="match status" value="1"/>
</dbReference>
<reference key="1">
    <citation type="journal article" date="1993" name="Biochim. Biophys. Acta">
        <title>Molecular cloning of two novel protein kinase genes from Arabidopsis thaliana.</title>
        <authorList>
            <person name="Moran T.V."/>
            <person name="Walker J.C."/>
        </authorList>
    </citation>
    <scope>NUCLEOTIDE SEQUENCE [MRNA]</scope>
    <scope>TISSUE SPECIFICITY</scope>
    <source>
        <strain>cv. Columbia</strain>
    </source>
</reference>
<reference key="2">
    <citation type="journal article" date="2000" name="Nature">
        <title>Sequence and analysis of chromosome 5 of the plant Arabidopsis thaliana.</title>
        <authorList>
            <person name="Tabata S."/>
            <person name="Kaneko T."/>
            <person name="Nakamura Y."/>
            <person name="Kotani H."/>
            <person name="Kato T."/>
            <person name="Asamizu E."/>
            <person name="Miyajima N."/>
            <person name="Sasamoto S."/>
            <person name="Kimura T."/>
            <person name="Hosouchi T."/>
            <person name="Kawashima K."/>
            <person name="Kohara M."/>
            <person name="Matsumoto M."/>
            <person name="Matsuno A."/>
            <person name="Muraki A."/>
            <person name="Nakayama S."/>
            <person name="Nakazaki N."/>
            <person name="Naruo K."/>
            <person name="Okumura S."/>
            <person name="Shinpo S."/>
            <person name="Takeuchi C."/>
            <person name="Wada T."/>
            <person name="Watanabe A."/>
            <person name="Yamada M."/>
            <person name="Yasuda M."/>
            <person name="Sato S."/>
            <person name="de la Bastide M."/>
            <person name="Huang E."/>
            <person name="Spiegel L."/>
            <person name="Gnoj L."/>
            <person name="O'Shaughnessy A."/>
            <person name="Preston R."/>
            <person name="Habermann K."/>
            <person name="Murray J."/>
            <person name="Johnson D."/>
            <person name="Rohlfing T."/>
            <person name="Nelson J."/>
            <person name="Stoneking T."/>
            <person name="Pepin K."/>
            <person name="Spieth J."/>
            <person name="Sekhon M."/>
            <person name="Armstrong J."/>
            <person name="Becker M."/>
            <person name="Belter E."/>
            <person name="Cordum H."/>
            <person name="Cordes M."/>
            <person name="Courtney L."/>
            <person name="Courtney W."/>
            <person name="Dante M."/>
            <person name="Du H."/>
            <person name="Edwards J."/>
            <person name="Fryman J."/>
            <person name="Haakensen B."/>
            <person name="Lamar E."/>
            <person name="Latreille P."/>
            <person name="Leonard S."/>
            <person name="Meyer R."/>
            <person name="Mulvaney E."/>
            <person name="Ozersky P."/>
            <person name="Riley A."/>
            <person name="Strowmatt C."/>
            <person name="Wagner-McPherson C."/>
            <person name="Wollam A."/>
            <person name="Yoakum M."/>
            <person name="Bell M."/>
            <person name="Dedhia N."/>
            <person name="Parnell L."/>
            <person name="Shah R."/>
            <person name="Rodriguez M."/>
            <person name="Hoon See L."/>
            <person name="Vil D."/>
            <person name="Baker J."/>
            <person name="Kirchoff K."/>
            <person name="Toth K."/>
            <person name="King L."/>
            <person name="Bahret A."/>
            <person name="Miller B."/>
            <person name="Marra M.A."/>
            <person name="Martienssen R."/>
            <person name="McCombie W.R."/>
            <person name="Wilson R.K."/>
            <person name="Murphy G."/>
            <person name="Bancroft I."/>
            <person name="Volckaert G."/>
            <person name="Wambutt R."/>
            <person name="Duesterhoeft A."/>
            <person name="Stiekema W."/>
            <person name="Pohl T."/>
            <person name="Entian K.-D."/>
            <person name="Terryn N."/>
            <person name="Hartley N."/>
            <person name="Bent E."/>
            <person name="Johnson S."/>
            <person name="Langham S.-A."/>
            <person name="McCullagh B."/>
            <person name="Robben J."/>
            <person name="Grymonprez B."/>
            <person name="Zimmermann W."/>
            <person name="Ramsperger U."/>
            <person name="Wedler H."/>
            <person name="Balke K."/>
            <person name="Wedler E."/>
            <person name="Peters S."/>
            <person name="van Staveren M."/>
            <person name="Dirkse W."/>
            <person name="Mooijman P."/>
            <person name="Klein Lankhorst R."/>
            <person name="Weitzenegger T."/>
            <person name="Bothe G."/>
            <person name="Rose M."/>
            <person name="Hauf J."/>
            <person name="Berneiser S."/>
            <person name="Hempel S."/>
            <person name="Feldpausch M."/>
            <person name="Lamberth S."/>
            <person name="Villarroel R."/>
            <person name="Gielen J."/>
            <person name="Ardiles W."/>
            <person name="Bents O."/>
            <person name="Lemcke K."/>
            <person name="Kolesov G."/>
            <person name="Mayer K.F.X."/>
            <person name="Rudd S."/>
            <person name="Schoof H."/>
            <person name="Schueller C."/>
            <person name="Zaccaria P."/>
            <person name="Mewes H.-W."/>
            <person name="Bevan M."/>
            <person name="Fransz P.F."/>
        </authorList>
    </citation>
    <scope>NUCLEOTIDE SEQUENCE [LARGE SCALE GENOMIC DNA]</scope>
    <source>
        <strain>cv. Columbia</strain>
    </source>
</reference>
<reference key="3">
    <citation type="journal article" date="2017" name="Plant J.">
        <title>Araport11: a complete reannotation of the Arabidopsis thaliana reference genome.</title>
        <authorList>
            <person name="Cheng C.Y."/>
            <person name="Krishnakumar V."/>
            <person name="Chan A.P."/>
            <person name="Thibaud-Nissen F."/>
            <person name="Schobel S."/>
            <person name="Town C.D."/>
        </authorList>
    </citation>
    <scope>GENOME REANNOTATION</scope>
    <source>
        <strain>cv. Columbia</strain>
    </source>
</reference>
<reference key="4">
    <citation type="submission" date="2006-07" db="EMBL/GenBank/DDBJ databases">
        <title>Large-scale analysis of RIKEN Arabidopsis full-length (RAFL) cDNAs.</title>
        <authorList>
            <person name="Totoki Y."/>
            <person name="Seki M."/>
            <person name="Ishida J."/>
            <person name="Nakajima M."/>
            <person name="Enju A."/>
            <person name="Kamiya A."/>
            <person name="Narusaka M."/>
            <person name="Shin-i T."/>
            <person name="Nakagawa M."/>
            <person name="Sakamoto N."/>
            <person name="Oishi K."/>
            <person name="Kohara Y."/>
            <person name="Kobayashi M."/>
            <person name="Toyoda A."/>
            <person name="Sakaki Y."/>
            <person name="Sakurai T."/>
            <person name="Iida K."/>
            <person name="Akiyama K."/>
            <person name="Satou M."/>
            <person name="Toyoda T."/>
            <person name="Konagaya A."/>
            <person name="Carninci P."/>
            <person name="Kawai J."/>
            <person name="Hayashizaki Y."/>
            <person name="Shinozaki K."/>
        </authorList>
    </citation>
    <scope>NUCLEOTIDE SEQUENCE [LARGE SCALE MRNA]</scope>
    <source>
        <strain>cv. Columbia</strain>
    </source>
</reference>
<reference key="5">
    <citation type="submission" date="2002-03" db="EMBL/GenBank/DDBJ databases">
        <title>Full-length cDNA from Arabidopsis thaliana.</title>
        <authorList>
            <person name="Brover V.V."/>
            <person name="Troukhan M.E."/>
            <person name="Alexandrov N.A."/>
            <person name="Lu Y.-P."/>
            <person name="Flavell R.B."/>
            <person name="Feldmann K.A."/>
        </authorList>
    </citation>
    <scope>NUCLEOTIDE SEQUENCE [LARGE SCALE MRNA]</scope>
</reference>
<reference key="6">
    <citation type="journal article" date="2009" name="Plant Physiol.">
        <title>Large-scale Arabidopsis phosphoproteome profiling reveals novel chloroplast kinase substrates and phosphorylation networks.</title>
        <authorList>
            <person name="Reiland S."/>
            <person name="Messerli G."/>
            <person name="Baerenfaller K."/>
            <person name="Gerrits B."/>
            <person name="Endler A."/>
            <person name="Grossmann J."/>
            <person name="Gruissem W."/>
            <person name="Baginsky S."/>
        </authorList>
    </citation>
    <scope>IDENTIFICATION BY MASS SPECTROMETRY [LARGE SCALE ANALYSIS]</scope>
</reference>
<reference key="7">
    <citation type="journal article" date="2010" name="Cell Host Microbe">
        <title>Receptor-like cytoplasmic kinases integrate signaling from multiple plant immune receptors and are targeted by a Pseudomonas syringae effector.</title>
        <authorList>
            <person name="Zhang J."/>
            <person name="Li W."/>
            <person name="Xiang T."/>
            <person name="Liu Z."/>
            <person name="Laluk K."/>
            <person name="Ding X."/>
            <person name="Zou Y."/>
            <person name="Gao M."/>
            <person name="Zhang X."/>
            <person name="Chen S."/>
            <person name="Mengiste T."/>
            <person name="Zhang Y."/>
            <person name="Zhou J.M."/>
        </authorList>
    </citation>
    <scope>GENE FAMILY</scope>
    <scope>NOMENCLATURE</scope>
</reference>
<feature type="initiator methionine" description="Removed" evidence="7">
    <location>
        <position position="1"/>
    </location>
</feature>
<feature type="chain" id="PRO_0000086417" description="Probable serine/threonine-protein kinase PBL11">
    <location>
        <begin position="2"/>
        <end position="389"/>
    </location>
</feature>
<feature type="domain" description="Protein kinase" evidence="3">
    <location>
        <begin position="68"/>
        <end position="353"/>
    </location>
</feature>
<feature type="active site" description="Proton acceptor" evidence="3">
    <location>
        <position position="203"/>
    </location>
</feature>
<feature type="binding site" evidence="3">
    <location>
        <begin position="74"/>
        <end position="82"/>
    </location>
    <ligand>
        <name>ATP</name>
        <dbReference type="ChEBI" id="CHEBI:30616"/>
    </ligand>
</feature>
<feature type="binding site" evidence="3">
    <location>
        <position position="106"/>
    </location>
    <ligand>
        <name>ATP</name>
        <dbReference type="ChEBI" id="CHEBI:30616"/>
    </ligand>
</feature>
<feature type="modified residue" description="Phosphotyrosine" evidence="1">
    <location>
        <position position="151"/>
    </location>
</feature>
<feature type="modified residue" description="Phosphoserine" evidence="1">
    <location>
        <position position="207"/>
    </location>
</feature>
<feature type="modified residue" description="Phosphoserine" evidence="1">
    <location>
        <position position="237"/>
    </location>
</feature>
<feature type="modified residue" description="Phosphothreonine" evidence="1">
    <location>
        <position position="238"/>
    </location>
</feature>
<feature type="modified residue" description="Phosphothreonine" evidence="1">
    <location>
        <position position="243"/>
    </location>
</feature>
<feature type="modified residue" description="Phosphotyrosine" evidence="1">
    <location>
        <position position="251"/>
    </location>
</feature>
<feature type="lipid moiety-binding region" description="N-myristoyl glycine" evidence="2">
    <location>
        <position position="2"/>
    </location>
</feature>
<feature type="lipid moiety-binding region" description="S-palmitoyl cysteine" evidence="2">
    <location>
        <position position="4"/>
    </location>
</feature>
<feature type="sequence conflict" description="In Ref. 1; AAA18853." evidence="7" ref="1">
    <original>G</original>
    <variation>V</variation>
    <location>
        <position position="287"/>
    </location>
</feature>
<evidence type="ECO:0000250" key="1">
    <source>
        <dbReference type="UniProtKB" id="O48814"/>
    </source>
</evidence>
<evidence type="ECO:0000250" key="2">
    <source>
        <dbReference type="UniProtKB" id="Q9FE20"/>
    </source>
</evidence>
<evidence type="ECO:0000255" key="3">
    <source>
        <dbReference type="PROSITE-ProRule" id="PRU00159"/>
    </source>
</evidence>
<evidence type="ECO:0000269" key="4">
    <source>
    </source>
</evidence>
<evidence type="ECO:0000303" key="5">
    <source>
    </source>
</evidence>
<evidence type="ECO:0000303" key="6">
    <source>
    </source>
</evidence>
<evidence type="ECO:0000305" key="7"/>
<evidence type="ECO:0000305" key="8">
    <source>
    </source>
</evidence>
<proteinExistence type="evidence at protein level"/>
<sequence length="389" mass="43534">MGGCFSNRIKTDIASSTWLSSKFLSRDGSKGSSTASFSYMPRTEGEILQNANLKNFSLSELKSATRNFRPDSVVGEGGFGCVFKGWIDESSLAPSKPGTGIVIAVKRLNQEGFQGHREWLAEINYLGQLDHPNLVKLIGYCLEEEHRLLVYEFMTRGSLENHLFRRGTFYQPLSWNTRVRMALGAARGLAFLHNAQPQVIYRDFKASNILLDSNYNAKLSDFGLARDGPMGDNSHVSTRVMGTQGYAAPEYLATGHLSVKSDVYSFGVVLLELLSGRRAIDKNQPVGEHNLVDWARPYLTNKRRLLRVMDPRLQGQYSLTRALKIAVLALDCISIDAKSRPTMNEIVKTMEELHIQKEASKEQQNPQISIDNIINKSPQAVNYPRPSIM</sequence>
<protein>
    <recommendedName>
        <fullName evidence="7">Probable serine/threonine-protein kinase PBL11</fullName>
        <ecNumber evidence="7">2.7.11.1</ecNumber>
    </recommendedName>
    <alternativeName>
        <fullName evidence="5">PBS1-like protein 11</fullName>
    </alternativeName>
</protein>
<keyword id="KW-0067">ATP-binding</keyword>
<keyword id="KW-1003">Cell membrane</keyword>
<keyword id="KW-0418">Kinase</keyword>
<keyword id="KW-0449">Lipoprotein</keyword>
<keyword id="KW-0472">Membrane</keyword>
<keyword id="KW-0519">Myristate</keyword>
<keyword id="KW-0547">Nucleotide-binding</keyword>
<keyword id="KW-0564">Palmitate</keyword>
<keyword id="KW-0597">Phosphoprotein</keyword>
<keyword id="KW-0611">Plant defense</keyword>
<keyword id="KW-1185">Reference proteome</keyword>
<keyword id="KW-0723">Serine/threonine-protein kinase</keyword>
<keyword id="KW-0808">Transferase</keyword>
<comment type="function">
    <text evidence="1 8">May play a role in the regulation of plant growth and development (Probable). May be involved in plant defense signaling (By similarity).</text>
</comment>
<comment type="catalytic activity">
    <reaction evidence="7">
        <text>L-seryl-[protein] + ATP = O-phospho-L-seryl-[protein] + ADP + H(+)</text>
        <dbReference type="Rhea" id="RHEA:17989"/>
        <dbReference type="Rhea" id="RHEA-COMP:9863"/>
        <dbReference type="Rhea" id="RHEA-COMP:11604"/>
        <dbReference type="ChEBI" id="CHEBI:15378"/>
        <dbReference type="ChEBI" id="CHEBI:29999"/>
        <dbReference type="ChEBI" id="CHEBI:30616"/>
        <dbReference type="ChEBI" id="CHEBI:83421"/>
        <dbReference type="ChEBI" id="CHEBI:456216"/>
        <dbReference type="EC" id="2.7.11.1"/>
    </reaction>
</comment>
<comment type="catalytic activity">
    <reaction evidence="7">
        <text>L-threonyl-[protein] + ATP = O-phospho-L-threonyl-[protein] + ADP + H(+)</text>
        <dbReference type="Rhea" id="RHEA:46608"/>
        <dbReference type="Rhea" id="RHEA-COMP:11060"/>
        <dbReference type="Rhea" id="RHEA-COMP:11605"/>
        <dbReference type="ChEBI" id="CHEBI:15378"/>
        <dbReference type="ChEBI" id="CHEBI:30013"/>
        <dbReference type="ChEBI" id="CHEBI:30616"/>
        <dbReference type="ChEBI" id="CHEBI:61977"/>
        <dbReference type="ChEBI" id="CHEBI:456216"/>
        <dbReference type="EC" id="2.7.11.1"/>
    </reaction>
</comment>
<comment type="subcellular location">
    <subcellularLocation>
        <location evidence="1">Cell membrane</location>
        <topology evidence="1">Lipid-anchor</topology>
    </subcellularLocation>
</comment>
<comment type="tissue specificity">
    <text evidence="4">Roots, leaves and stems.</text>
</comment>
<comment type="similarity">
    <text evidence="3">Belongs to the protein kinase superfamily. Ser/Thr protein kinase family.</text>
</comment>
<organism>
    <name type="scientific">Arabidopsis thaliana</name>
    <name type="common">Mouse-ear cress</name>
    <dbReference type="NCBI Taxonomy" id="3702"/>
    <lineage>
        <taxon>Eukaryota</taxon>
        <taxon>Viridiplantae</taxon>
        <taxon>Streptophyta</taxon>
        <taxon>Embryophyta</taxon>
        <taxon>Tracheophyta</taxon>
        <taxon>Spermatophyta</taxon>
        <taxon>Magnoliopsida</taxon>
        <taxon>eudicotyledons</taxon>
        <taxon>Gunneridae</taxon>
        <taxon>Pentapetalae</taxon>
        <taxon>rosids</taxon>
        <taxon>malvids</taxon>
        <taxon>Brassicales</taxon>
        <taxon>Brassicaceae</taxon>
        <taxon>Camelineae</taxon>
        <taxon>Arabidopsis</taxon>
    </lineage>
</organism>